<name>SYR_BURP6</name>
<sequence length="594" mass="64520">MLPAQKHTLETLLENSVKQVVQASKGDADAAFVLPAIALERPKVAAHGDVACNVALQLAKPLGANPRQLAEQIVAALTAQPEAAGLVDAAEIAGPGFINLRLTPASKQAVIGAVLAQGRAFGASERDHGKRVLLEFVSANPTGPLHVGHGRQAALGDALANVLASQGYAVHREFYYNDAGVQIGNLAISTQARARGLKPGDAGWPEAAYNGEYIADIARDYLNGETVAASDGEPVTGKRDVEDLEAIRKFAVTYLRREQDMDLKAFGVKFDQYYLESSLYTEGRVEKTVDALIAAGMTYEQEGALWLRTTDEGDDKDRVMRKTDGTYTYFVPDVAYHVTKWERGFTKVINIQGSDHHGTIARVRAGLQGLHIGIPKGYPDYVLHKMVTVMRDGQEVKISKRAGSYVTVRDLIEWSGGATPGSEGSPELLDEATITRGRDAVRFFLISRKADTEFVFDIDLALKQNDENPVYYVQYAHARICSVINEWKSRYGATDALLPGADLSPLDSKQAMALMQKLAEYPDVLAHAAGELAPHAVAFYLRELASEFHSFYNAERVLVDEQAPRTARVALLAATRQVLENGLAMLGVSAPSKM</sequence>
<accession>A3N542</accession>
<protein>
    <recommendedName>
        <fullName evidence="1">Arginine--tRNA ligase</fullName>
        <ecNumber evidence="1">6.1.1.19</ecNumber>
    </recommendedName>
    <alternativeName>
        <fullName evidence="1">Arginyl-tRNA synthetase</fullName>
        <shortName evidence="1">ArgRS</shortName>
    </alternativeName>
</protein>
<evidence type="ECO:0000255" key="1">
    <source>
        <dbReference type="HAMAP-Rule" id="MF_00123"/>
    </source>
</evidence>
<gene>
    <name evidence="1" type="primary">argS</name>
    <name type="ordered locus">BURPS668_0410</name>
</gene>
<keyword id="KW-0030">Aminoacyl-tRNA synthetase</keyword>
<keyword id="KW-0067">ATP-binding</keyword>
<keyword id="KW-0963">Cytoplasm</keyword>
<keyword id="KW-0436">Ligase</keyword>
<keyword id="KW-0547">Nucleotide-binding</keyword>
<keyword id="KW-0648">Protein biosynthesis</keyword>
<feature type="chain" id="PRO_1000018004" description="Arginine--tRNA ligase">
    <location>
        <begin position="1"/>
        <end position="594"/>
    </location>
</feature>
<feature type="short sequence motif" description="'HIGH' region">
    <location>
        <begin position="139"/>
        <end position="149"/>
    </location>
</feature>
<organism>
    <name type="scientific">Burkholderia pseudomallei (strain 668)</name>
    <dbReference type="NCBI Taxonomy" id="320373"/>
    <lineage>
        <taxon>Bacteria</taxon>
        <taxon>Pseudomonadati</taxon>
        <taxon>Pseudomonadota</taxon>
        <taxon>Betaproteobacteria</taxon>
        <taxon>Burkholderiales</taxon>
        <taxon>Burkholderiaceae</taxon>
        <taxon>Burkholderia</taxon>
        <taxon>pseudomallei group</taxon>
    </lineage>
</organism>
<dbReference type="EC" id="6.1.1.19" evidence="1"/>
<dbReference type="EMBL" id="CP000570">
    <property type="protein sequence ID" value="ABN81771.1"/>
    <property type="molecule type" value="Genomic_DNA"/>
</dbReference>
<dbReference type="RefSeq" id="WP_004522947.1">
    <property type="nucleotide sequence ID" value="NC_009074.1"/>
</dbReference>
<dbReference type="SMR" id="A3N542"/>
<dbReference type="KEGG" id="bpd:BURPS668_0410"/>
<dbReference type="HOGENOM" id="CLU_006406_0_1_4"/>
<dbReference type="GO" id="GO:0005737">
    <property type="term" value="C:cytoplasm"/>
    <property type="evidence" value="ECO:0007669"/>
    <property type="project" value="UniProtKB-SubCell"/>
</dbReference>
<dbReference type="GO" id="GO:0004814">
    <property type="term" value="F:arginine-tRNA ligase activity"/>
    <property type="evidence" value="ECO:0007669"/>
    <property type="project" value="UniProtKB-UniRule"/>
</dbReference>
<dbReference type="GO" id="GO:0005524">
    <property type="term" value="F:ATP binding"/>
    <property type="evidence" value="ECO:0007669"/>
    <property type="project" value="UniProtKB-UniRule"/>
</dbReference>
<dbReference type="GO" id="GO:0006420">
    <property type="term" value="P:arginyl-tRNA aminoacylation"/>
    <property type="evidence" value="ECO:0007669"/>
    <property type="project" value="UniProtKB-UniRule"/>
</dbReference>
<dbReference type="CDD" id="cd07956">
    <property type="entry name" value="Anticodon_Ia_Arg"/>
    <property type="match status" value="1"/>
</dbReference>
<dbReference type="CDD" id="cd00671">
    <property type="entry name" value="ArgRS_core"/>
    <property type="match status" value="1"/>
</dbReference>
<dbReference type="FunFam" id="1.10.730.10:FF:000008">
    <property type="entry name" value="Arginine--tRNA ligase"/>
    <property type="match status" value="1"/>
</dbReference>
<dbReference type="FunFam" id="3.40.50.620:FF:000062">
    <property type="entry name" value="Arginine--tRNA ligase"/>
    <property type="match status" value="1"/>
</dbReference>
<dbReference type="Gene3D" id="3.30.1360.70">
    <property type="entry name" value="Arginyl tRNA synthetase N-terminal domain"/>
    <property type="match status" value="1"/>
</dbReference>
<dbReference type="Gene3D" id="3.40.50.620">
    <property type="entry name" value="HUPs"/>
    <property type="match status" value="1"/>
</dbReference>
<dbReference type="Gene3D" id="1.10.730.10">
    <property type="entry name" value="Isoleucyl-tRNA Synthetase, Domain 1"/>
    <property type="match status" value="1"/>
</dbReference>
<dbReference type="HAMAP" id="MF_00123">
    <property type="entry name" value="Arg_tRNA_synth"/>
    <property type="match status" value="1"/>
</dbReference>
<dbReference type="InterPro" id="IPR001412">
    <property type="entry name" value="aa-tRNA-synth_I_CS"/>
</dbReference>
<dbReference type="InterPro" id="IPR001278">
    <property type="entry name" value="Arg-tRNA-ligase"/>
</dbReference>
<dbReference type="InterPro" id="IPR005148">
    <property type="entry name" value="Arg-tRNA-synth_N"/>
</dbReference>
<dbReference type="InterPro" id="IPR036695">
    <property type="entry name" value="Arg-tRNA-synth_N_sf"/>
</dbReference>
<dbReference type="InterPro" id="IPR035684">
    <property type="entry name" value="ArgRS_core"/>
</dbReference>
<dbReference type="InterPro" id="IPR008909">
    <property type="entry name" value="DALR_anticod-bd"/>
</dbReference>
<dbReference type="InterPro" id="IPR014729">
    <property type="entry name" value="Rossmann-like_a/b/a_fold"/>
</dbReference>
<dbReference type="InterPro" id="IPR009080">
    <property type="entry name" value="tRNAsynth_Ia_anticodon-bd"/>
</dbReference>
<dbReference type="NCBIfam" id="TIGR00456">
    <property type="entry name" value="argS"/>
    <property type="match status" value="1"/>
</dbReference>
<dbReference type="PANTHER" id="PTHR11956:SF5">
    <property type="entry name" value="ARGININE--TRNA LIGASE, CYTOPLASMIC"/>
    <property type="match status" value="1"/>
</dbReference>
<dbReference type="PANTHER" id="PTHR11956">
    <property type="entry name" value="ARGINYL-TRNA SYNTHETASE"/>
    <property type="match status" value="1"/>
</dbReference>
<dbReference type="Pfam" id="PF03485">
    <property type="entry name" value="Arg_tRNA_synt_N"/>
    <property type="match status" value="1"/>
</dbReference>
<dbReference type="Pfam" id="PF05746">
    <property type="entry name" value="DALR_1"/>
    <property type="match status" value="1"/>
</dbReference>
<dbReference type="Pfam" id="PF00750">
    <property type="entry name" value="tRNA-synt_1d"/>
    <property type="match status" value="1"/>
</dbReference>
<dbReference type="PRINTS" id="PR01038">
    <property type="entry name" value="TRNASYNTHARG"/>
</dbReference>
<dbReference type="SMART" id="SM01016">
    <property type="entry name" value="Arg_tRNA_synt_N"/>
    <property type="match status" value="1"/>
</dbReference>
<dbReference type="SMART" id="SM00836">
    <property type="entry name" value="DALR_1"/>
    <property type="match status" value="1"/>
</dbReference>
<dbReference type="SUPFAM" id="SSF47323">
    <property type="entry name" value="Anticodon-binding domain of a subclass of class I aminoacyl-tRNA synthetases"/>
    <property type="match status" value="1"/>
</dbReference>
<dbReference type="SUPFAM" id="SSF55190">
    <property type="entry name" value="Arginyl-tRNA synthetase (ArgRS), N-terminal 'additional' domain"/>
    <property type="match status" value="1"/>
</dbReference>
<dbReference type="SUPFAM" id="SSF52374">
    <property type="entry name" value="Nucleotidylyl transferase"/>
    <property type="match status" value="1"/>
</dbReference>
<dbReference type="PROSITE" id="PS00178">
    <property type="entry name" value="AA_TRNA_LIGASE_I"/>
    <property type="match status" value="1"/>
</dbReference>
<proteinExistence type="inferred from homology"/>
<reference key="1">
    <citation type="journal article" date="2010" name="Genome Biol. Evol.">
        <title>Continuing evolution of Burkholderia mallei through genome reduction and large-scale rearrangements.</title>
        <authorList>
            <person name="Losada L."/>
            <person name="Ronning C.M."/>
            <person name="DeShazer D."/>
            <person name="Woods D."/>
            <person name="Fedorova N."/>
            <person name="Kim H.S."/>
            <person name="Shabalina S.A."/>
            <person name="Pearson T.R."/>
            <person name="Brinkac L."/>
            <person name="Tan P."/>
            <person name="Nandi T."/>
            <person name="Crabtree J."/>
            <person name="Badger J."/>
            <person name="Beckstrom-Sternberg S."/>
            <person name="Saqib M."/>
            <person name="Schutzer S.E."/>
            <person name="Keim P."/>
            <person name="Nierman W.C."/>
        </authorList>
    </citation>
    <scope>NUCLEOTIDE SEQUENCE [LARGE SCALE GENOMIC DNA]</scope>
    <source>
        <strain>668</strain>
    </source>
</reference>
<comment type="catalytic activity">
    <reaction evidence="1">
        <text>tRNA(Arg) + L-arginine + ATP = L-arginyl-tRNA(Arg) + AMP + diphosphate</text>
        <dbReference type="Rhea" id="RHEA:20301"/>
        <dbReference type="Rhea" id="RHEA-COMP:9658"/>
        <dbReference type="Rhea" id="RHEA-COMP:9673"/>
        <dbReference type="ChEBI" id="CHEBI:30616"/>
        <dbReference type="ChEBI" id="CHEBI:32682"/>
        <dbReference type="ChEBI" id="CHEBI:33019"/>
        <dbReference type="ChEBI" id="CHEBI:78442"/>
        <dbReference type="ChEBI" id="CHEBI:78513"/>
        <dbReference type="ChEBI" id="CHEBI:456215"/>
        <dbReference type="EC" id="6.1.1.19"/>
    </reaction>
</comment>
<comment type="subunit">
    <text evidence="1">Monomer.</text>
</comment>
<comment type="subcellular location">
    <subcellularLocation>
        <location evidence="1">Cytoplasm</location>
    </subcellularLocation>
</comment>
<comment type="similarity">
    <text evidence="1">Belongs to the class-I aminoacyl-tRNA synthetase family.</text>
</comment>